<evidence type="ECO:0000255" key="1">
    <source>
        <dbReference type="HAMAP-Rule" id="MF_00323"/>
    </source>
</evidence>
<reference key="1">
    <citation type="journal article" date="2002" name="Proc. Natl. Acad. Sci. U.S.A.">
        <title>The genome sequence of the facultative intracellular pathogen Brucella melitensis.</title>
        <authorList>
            <person name="DelVecchio V.G."/>
            <person name="Kapatral V."/>
            <person name="Redkar R.J."/>
            <person name="Patra G."/>
            <person name="Mujer C."/>
            <person name="Los T."/>
            <person name="Ivanova N."/>
            <person name="Anderson I."/>
            <person name="Bhattacharyya A."/>
            <person name="Lykidis A."/>
            <person name="Reznik G."/>
            <person name="Jablonski L."/>
            <person name="Larsen N."/>
            <person name="D'Souza M."/>
            <person name="Bernal A."/>
            <person name="Mazur M."/>
            <person name="Goltsman E."/>
            <person name="Selkov E."/>
            <person name="Elzer P.H."/>
            <person name="Hagius S."/>
            <person name="O'Callaghan D."/>
            <person name="Letesson J.-J."/>
            <person name="Haselkorn R."/>
            <person name="Kyrpides N.C."/>
            <person name="Overbeek R."/>
        </authorList>
    </citation>
    <scope>NUCLEOTIDE SEQUENCE [LARGE SCALE GENOMIC DNA]</scope>
    <source>
        <strain>ATCC 23456 / CCUG 17765 / NCTC 10094 / 16M</strain>
    </source>
</reference>
<proteinExistence type="inferred from homology"/>
<protein>
    <recommendedName>
        <fullName evidence="1">Ferrochelatase</fullName>
        <ecNumber evidence="1">4.98.1.1</ecNumber>
    </recommendedName>
    <alternativeName>
        <fullName evidence="1">Heme synthase</fullName>
    </alternativeName>
    <alternativeName>
        <fullName evidence="1">Protoheme ferro-lyase</fullName>
    </alternativeName>
</protein>
<gene>
    <name evidence="1" type="primary">hemH</name>
    <name type="ordered locus">BMEII0018</name>
</gene>
<sequence>MSGTDKVRVNVSQTAQTPLHTSAKLPKVGVLLVNLGTPDGTSYGPMRRYLAEFLSDRRVIEWSRLIWYPILYGIVLNTRPRRSGRLYDRIWNHENNESPLRTYTRAQGEKLAKALSDQPNVVVDWAMRYGQPSIESITDRLLQQGCERIVIFPLYPQYSATTTATVNDKFFEALMKKRFMPAIRTVPSYEAEPVYIDALARSVEKHLATLSFKPEVILTSYHGIPKSYSDKGDPYRQQCLETTRLLRERLGLGEDEMRATFQSRFGPEEWLQPYTDETVKELAKNGVKSVAVLNPGFVADCLETVDEIGNEAAEEFLENGGENFSHIPCLNDSEEGMKVIETLVRRELLGWV</sequence>
<keyword id="KW-0963">Cytoplasm</keyword>
<keyword id="KW-0350">Heme biosynthesis</keyword>
<keyword id="KW-0408">Iron</keyword>
<keyword id="KW-0456">Lyase</keyword>
<keyword id="KW-0479">Metal-binding</keyword>
<keyword id="KW-0627">Porphyrin biosynthesis</keyword>
<accession>P0A3D6</accession>
<accession>Q939N8</accession>
<accession>Q93TG2</accession>
<dbReference type="EC" id="4.98.1.1" evidence="1"/>
<dbReference type="EMBL" id="AE008918">
    <property type="protein sequence ID" value="AAL53259.1"/>
    <property type="molecule type" value="Genomic_DNA"/>
</dbReference>
<dbReference type="PIR" id="AH3511">
    <property type="entry name" value="AH3511"/>
</dbReference>
<dbReference type="RefSeq" id="WP_004681236.1">
    <property type="nucleotide sequence ID" value="NZ_GG703779.1"/>
</dbReference>
<dbReference type="SMR" id="P0A3D6"/>
<dbReference type="GeneID" id="97535704"/>
<dbReference type="KEGG" id="bme:BMEII0018"/>
<dbReference type="KEGG" id="bmel:DK63_2101"/>
<dbReference type="PATRIC" id="fig|224914.52.peg.2202"/>
<dbReference type="eggNOG" id="COG0276">
    <property type="taxonomic scope" value="Bacteria"/>
</dbReference>
<dbReference type="PhylomeDB" id="P0A3D6"/>
<dbReference type="UniPathway" id="UPA00252">
    <property type="reaction ID" value="UER00325"/>
</dbReference>
<dbReference type="Proteomes" id="UP000000419">
    <property type="component" value="Chromosome II"/>
</dbReference>
<dbReference type="GO" id="GO:0005737">
    <property type="term" value="C:cytoplasm"/>
    <property type="evidence" value="ECO:0007669"/>
    <property type="project" value="UniProtKB-SubCell"/>
</dbReference>
<dbReference type="GO" id="GO:0004325">
    <property type="term" value="F:ferrochelatase activity"/>
    <property type="evidence" value="ECO:0007669"/>
    <property type="project" value="UniProtKB-UniRule"/>
</dbReference>
<dbReference type="GO" id="GO:0046872">
    <property type="term" value="F:metal ion binding"/>
    <property type="evidence" value="ECO:0007669"/>
    <property type="project" value="UniProtKB-KW"/>
</dbReference>
<dbReference type="GO" id="GO:0006783">
    <property type="term" value="P:heme biosynthetic process"/>
    <property type="evidence" value="ECO:0007669"/>
    <property type="project" value="UniProtKB-UniRule"/>
</dbReference>
<dbReference type="CDD" id="cd00419">
    <property type="entry name" value="Ferrochelatase_C"/>
    <property type="match status" value="1"/>
</dbReference>
<dbReference type="CDD" id="cd03411">
    <property type="entry name" value="Ferrochelatase_N"/>
    <property type="match status" value="1"/>
</dbReference>
<dbReference type="FunFam" id="3.40.50.1400:FF:000002">
    <property type="entry name" value="Ferrochelatase"/>
    <property type="match status" value="1"/>
</dbReference>
<dbReference type="Gene3D" id="3.40.50.1400">
    <property type="match status" value="2"/>
</dbReference>
<dbReference type="HAMAP" id="MF_00323">
    <property type="entry name" value="Ferrochelatase"/>
    <property type="match status" value="1"/>
</dbReference>
<dbReference type="InterPro" id="IPR001015">
    <property type="entry name" value="Ferrochelatase"/>
</dbReference>
<dbReference type="InterPro" id="IPR019772">
    <property type="entry name" value="Ferrochelatase_AS"/>
</dbReference>
<dbReference type="InterPro" id="IPR033644">
    <property type="entry name" value="Ferrochelatase_C"/>
</dbReference>
<dbReference type="InterPro" id="IPR033659">
    <property type="entry name" value="Ferrochelatase_N"/>
</dbReference>
<dbReference type="NCBIfam" id="TIGR00109">
    <property type="entry name" value="hemH"/>
    <property type="match status" value="1"/>
</dbReference>
<dbReference type="PANTHER" id="PTHR11108">
    <property type="entry name" value="FERROCHELATASE"/>
    <property type="match status" value="1"/>
</dbReference>
<dbReference type="PANTHER" id="PTHR11108:SF1">
    <property type="entry name" value="FERROCHELATASE, MITOCHONDRIAL"/>
    <property type="match status" value="1"/>
</dbReference>
<dbReference type="Pfam" id="PF00762">
    <property type="entry name" value="Ferrochelatase"/>
    <property type="match status" value="1"/>
</dbReference>
<dbReference type="SUPFAM" id="SSF53800">
    <property type="entry name" value="Chelatase"/>
    <property type="match status" value="1"/>
</dbReference>
<dbReference type="PROSITE" id="PS00534">
    <property type="entry name" value="FERROCHELATASE"/>
    <property type="match status" value="1"/>
</dbReference>
<name>HEMH_BRUME</name>
<organism>
    <name type="scientific">Brucella melitensis biotype 1 (strain ATCC 23456 / CCUG 17765 / NCTC 10094 / 16M)</name>
    <dbReference type="NCBI Taxonomy" id="224914"/>
    <lineage>
        <taxon>Bacteria</taxon>
        <taxon>Pseudomonadati</taxon>
        <taxon>Pseudomonadota</taxon>
        <taxon>Alphaproteobacteria</taxon>
        <taxon>Hyphomicrobiales</taxon>
        <taxon>Brucellaceae</taxon>
        <taxon>Brucella/Ochrobactrum group</taxon>
        <taxon>Brucella</taxon>
    </lineage>
</organism>
<feature type="chain" id="PRO_0000175121" description="Ferrochelatase">
    <location>
        <begin position="1"/>
        <end position="352"/>
    </location>
</feature>
<feature type="binding site" evidence="1">
    <location>
        <position position="222"/>
    </location>
    <ligand>
        <name>Fe cation</name>
        <dbReference type="ChEBI" id="CHEBI:24875"/>
    </ligand>
</feature>
<feature type="binding site" evidence="1">
    <location>
        <position position="303"/>
    </location>
    <ligand>
        <name>Fe cation</name>
        <dbReference type="ChEBI" id="CHEBI:24875"/>
    </ligand>
</feature>
<comment type="function">
    <text evidence="1">Catalyzes the ferrous insertion into protoporphyrin IX.</text>
</comment>
<comment type="catalytic activity">
    <reaction evidence="1">
        <text>heme b + 2 H(+) = protoporphyrin IX + Fe(2+)</text>
        <dbReference type="Rhea" id="RHEA:22584"/>
        <dbReference type="ChEBI" id="CHEBI:15378"/>
        <dbReference type="ChEBI" id="CHEBI:29033"/>
        <dbReference type="ChEBI" id="CHEBI:57306"/>
        <dbReference type="ChEBI" id="CHEBI:60344"/>
        <dbReference type="EC" id="4.98.1.1"/>
    </reaction>
</comment>
<comment type="pathway">
    <text evidence="1">Porphyrin-containing compound metabolism; protoheme biosynthesis; protoheme from protoporphyrin-IX: step 1/1.</text>
</comment>
<comment type="subcellular location">
    <subcellularLocation>
        <location evidence="1">Cytoplasm</location>
    </subcellularLocation>
</comment>
<comment type="similarity">
    <text evidence="1">Belongs to the ferrochelatase family.</text>
</comment>